<evidence type="ECO:0000250" key="1"/>
<evidence type="ECO:0000255" key="2"/>
<evidence type="ECO:0000305" key="3"/>
<proteinExistence type="inferred from homology"/>
<feature type="chain" id="PRO_0000173363" description="Multidrug resistance protein MdtL">
    <location>
        <begin position="1"/>
        <end position="396"/>
    </location>
</feature>
<feature type="topological domain" description="Cytoplasmic" evidence="2">
    <location>
        <begin position="1"/>
        <end position="3"/>
    </location>
</feature>
<feature type="transmembrane region" description="Helical" evidence="2">
    <location>
        <begin position="4"/>
        <end position="24"/>
    </location>
</feature>
<feature type="topological domain" description="Periplasmic" evidence="2">
    <location>
        <begin position="25"/>
        <end position="41"/>
    </location>
</feature>
<feature type="transmembrane region" description="Helical" evidence="2">
    <location>
        <begin position="42"/>
        <end position="62"/>
    </location>
</feature>
<feature type="topological domain" description="Cytoplasmic" evidence="2">
    <location>
        <begin position="63"/>
        <end position="68"/>
    </location>
</feature>
<feature type="transmembrane region" description="Helical" evidence="2">
    <location>
        <begin position="69"/>
        <end position="89"/>
    </location>
</feature>
<feature type="topological domain" description="Periplasmic" evidence="2">
    <location>
        <begin position="90"/>
        <end position="94"/>
    </location>
</feature>
<feature type="transmembrane region" description="Helical" evidence="2">
    <location>
        <begin position="95"/>
        <end position="115"/>
    </location>
</feature>
<feature type="topological domain" description="Cytoplasmic" evidence="2">
    <location>
        <begin position="116"/>
        <end position="131"/>
    </location>
</feature>
<feature type="transmembrane region" description="Helical" evidence="2">
    <location>
        <begin position="132"/>
        <end position="152"/>
    </location>
</feature>
<feature type="topological domain" description="Periplasmic" evidence="2">
    <location>
        <begin position="153"/>
        <end position="157"/>
    </location>
</feature>
<feature type="transmembrane region" description="Helical" evidence="2">
    <location>
        <begin position="158"/>
        <end position="178"/>
    </location>
</feature>
<feature type="topological domain" description="Cytoplasmic" evidence="2">
    <location>
        <begin position="179"/>
        <end position="209"/>
    </location>
</feature>
<feature type="transmembrane region" description="Helical" evidence="2">
    <location>
        <begin position="210"/>
        <end position="230"/>
    </location>
</feature>
<feature type="topological domain" description="Periplasmic" evidence="2">
    <location>
        <begin position="231"/>
        <end position="245"/>
    </location>
</feature>
<feature type="transmembrane region" description="Helical" evidence="2">
    <location>
        <begin position="246"/>
        <end position="266"/>
    </location>
</feature>
<feature type="topological domain" description="Cytoplasmic" evidence="2">
    <location>
        <begin position="267"/>
        <end position="270"/>
    </location>
</feature>
<feature type="transmembrane region" description="Helical" evidence="2">
    <location>
        <begin position="271"/>
        <end position="291"/>
    </location>
</feature>
<feature type="topological domain" description="Periplasmic" evidence="2">
    <location>
        <begin position="292"/>
        <end position="297"/>
    </location>
</feature>
<feature type="transmembrane region" description="Helical" evidence="2">
    <location>
        <begin position="298"/>
        <end position="318"/>
    </location>
</feature>
<feature type="topological domain" description="Cytoplasmic" evidence="2">
    <location>
        <begin position="319"/>
        <end position="335"/>
    </location>
</feature>
<feature type="transmembrane region" description="Helical" evidence="2">
    <location>
        <begin position="336"/>
        <end position="356"/>
    </location>
</feature>
<feature type="topological domain" description="Periplasmic" evidence="2">
    <location>
        <begin position="357"/>
        <end position="360"/>
    </location>
</feature>
<feature type="transmembrane region" description="Helical" evidence="2">
    <location>
        <begin position="361"/>
        <end position="381"/>
    </location>
</feature>
<feature type="topological domain" description="Cytoplasmic" evidence="2">
    <location>
        <begin position="382"/>
        <end position="396"/>
    </location>
</feature>
<organism>
    <name type="scientific">Vibrio parahaemolyticus serotype O3:K6 (strain RIMD 2210633)</name>
    <dbReference type="NCBI Taxonomy" id="223926"/>
    <lineage>
        <taxon>Bacteria</taxon>
        <taxon>Pseudomonadati</taxon>
        <taxon>Pseudomonadota</taxon>
        <taxon>Gammaproteobacteria</taxon>
        <taxon>Vibrionales</taxon>
        <taxon>Vibrionaceae</taxon>
        <taxon>Vibrio</taxon>
    </lineage>
</organism>
<comment type="subcellular location">
    <subcellularLocation>
        <location evidence="1">Cell inner membrane</location>
        <topology evidence="1">Multi-pass membrane protein</topology>
    </subcellularLocation>
</comment>
<comment type="similarity">
    <text evidence="3">Belongs to the major facilitator superfamily. DHA1 family. MdtL (TC 2.A.1.2.22) subfamily.</text>
</comment>
<dbReference type="EMBL" id="BA000032">
    <property type="protein sequence ID" value="BAC62917.1"/>
    <property type="molecule type" value="Genomic_DNA"/>
</dbReference>
<dbReference type="RefSeq" id="NP_801084.1">
    <property type="nucleotide sequence ID" value="NC_004605.1"/>
</dbReference>
<dbReference type="RefSeq" id="WP_005480170.1">
    <property type="nucleotide sequence ID" value="NC_004605.1"/>
</dbReference>
<dbReference type="SMR" id="Q87FV4"/>
<dbReference type="GeneID" id="1192270"/>
<dbReference type="KEGG" id="vpa:VPA1574"/>
<dbReference type="PATRIC" id="fig|223926.6.peg.4495"/>
<dbReference type="eggNOG" id="COG2814">
    <property type="taxonomic scope" value="Bacteria"/>
</dbReference>
<dbReference type="HOGENOM" id="CLU_001265_47_1_6"/>
<dbReference type="Proteomes" id="UP000002493">
    <property type="component" value="Chromosome 2"/>
</dbReference>
<dbReference type="GO" id="GO:0005886">
    <property type="term" value="C:plasma membrane"/>
    <property type="evidence" value="ECO:0007669"/>
    <property type="project" value="UniProtKB-SubCell"/>
</dbReference>
<dbReference type="GO" id="GO:0022857">
    <property type="term" value="F:transmembrane transporter activity"/>
    <property type="evidence" value="ECO:0007669"/>
    <property type="project" value="UniProtKB-UniRule"/>
</dbReference>
<dbReference type="CDD" id="cd17320">
    <property type="entry name" value="MFS_MdfA_MDR_like"/>
    <property type="match status" value="1"/>
</dbReference>
<dbReference type="Gene3D" id="1.20.1720.10">
    <property type="entry name" value="Multidrug resistance protein D"/>
    <property type="match status" value="1"/>
</dbReference>
<dbReference type="HAMAP" id="MF_01530">
    <property type="entry name" value="MFS_MdtL"/>
    <property type="match status" value="1"/>
</dbReference>
<dbReference type="InterPro" id="IPR011701">
    <property type="entry name" value="MFS"/>
</dbReference>
<dbReference type="InterPro" id="IPR020846">
    <property type="entry name" value="MFS_dom"/>
</dbReference>
<dbReference type="InterPro" id="IPR036259">
    <property type="entry name" value="MFS_trans_sf"/>
</dbReference>
<dbReference type="InterPro" id="IPR023697">
    <property type="entry name" value="Multidrug-R_MdtL"/>
</dbReference>
<dbReference type="InterPro" id="IPR005829">
    <property type="entry name" value="Sugar_transporter_CS"/>
</dbReference>
<dbReference type="NCBIfam" id="NF007782">
    <property type="entry name" value="PRK10473.1"/>
    <property type="match status" value="1"/>
</dbReference>
<dbReference type="PANTHER" id="PTHR42718">
    <property type="entry name" value="MAJOR FACILITATOR SUPERFAMILY MULTIDRUG TRANSPORTER MFSC"/>
    <property type="match status" value="1"/>
</dbReference>
<dbReference type="PANTHER" id="PTHR42718:SF9">
    <property type="entry name" value="MAJOR FACILITATOR SUPERFAMILY MULTIDRUG TRANSPORTER MFSC"/>
    <property type="match status" value="1"/>
</dbReference>
<dbReference type="Pfam" id="PF07690">
    <property type="entry name" value="MFS_1"/>
    <property type="match status" value="1"/>
</dbReference>
<dbReference type="SUPFAM" id="SSF103473">
    <property type="entry name" value="MFS general substrate transporter"/>
    <property type="match status" value="1"/>
</dbReference>
<dbReference type="PROSITE" id="PS50850">
    <property type="entry name" value="MFS"/>
    <property type="match status" value="1"/>
</dbReference>
<dbReference type="PROSITE" id="PS00216">
    <property type="entry name" value="SUGAR_TRANSPORT_1"/>
    <property type="match status" value="1"/>
</dbReference>
<reference key="1">
    <citation type="journal article" date="2003" name="Lancet">
        <title>Genome sequence of Vibrio parahaemolyticus: a pathogenic mechanism distinct from that of V. cholerae.</title>
        <authorList>
            <person name="Makino K."/>
            <person name="Oshima K."/>
            <person name="Kurokawa K."/>
            <person name="Yokoyama K."/>
            <person name="Uda T."/>
            <person name="Tagomori K."/>
            <person name="Iijima Y."/>
            <person name="Najima M."/>
            <person name="Nakano M."/>
            <person name="Yamashita A."/>
            <person name="Kubota Y."/>
            <person name="Kimura S."/>
            <person name="Yasunaga T."/>
            <person name="Honda T."/>
            <person name="Shinagawa H."/>
            <person name="Hattori M."/>
            <person name="Iida T."/>
        </authorList>
    </citation>
    <scope>NUCLEOTIDE SEQUENCE [LARGE SCALE GENOMIC DNA]</scope>
    <source>
        <strain>RIMD 2210633</strain>
    </source>
</reference>
<name>MDTL_VIBPA</name>
<keyword id="KW-0997">Cell inner membrane</keyword>
<keyword id="KW-1003">Cell membrane</keyword>
<keyword id="KW-0472">Membrane</keyword>
<keyword id="KW-0812">Transmembrane</keyword>
<keyword id="KW-1133">Transmembrane helix</keyword>
<keyword id="KW-0813">Transport</keyword>
<accession>Q87FV4</accession>
<protein>
    <recommendedName>
        <fullName>Multidrug resistance protein MdtL</fullName>
    </recommendedName>
</protein>
<gene>
    <name type="primary">mdtL</name>
    <name type="ordered locus">VPA1574</name>
</gene>
<sequence>MSRFLLCSFALVLLYPTAIDLYLVGLPQIASDLNASESQLHIAFSVYLAGMATTMLFAGKIADSVGRKPIAVVGAMIFVLASFLGGMAEQPNTFLIARFCQGIGAGSCYVVAFAILRDTLDDERRAKVLSMLNGITCIIPVIAPVIGHLIMLKFPWPSLFTTMAGMGILVSVLAIFVLKESLPSQQGEEQTTPESHQETFFERFFISRLIITALGVTTILTFVNASPIVVMSMLGFDRGGYSSIMAGTAMISMLISFSAPLALGIFKQRTLMMTSQVLLACAAIVLSAAHFHDGQSHYYVFGLGLICAGFACGFGVAMSQALSPFSQQAGVASSLLGIAQVCSSAFYIWFMGFIGVSALNMLVFILVLGSVISLALILLIPKPVHDTHYEEIPSAT</sequence>